<reference key="1">
    <citation type="journal article" date="2008" name="ISME J.">
        <title>Comparative genomics of two ecotypes of the marine planktonic copiotroph Alteromonas macleodii suggests alternative lifestyles associated with different kinds of particulate organic matter.</title>
        <authorList>
            <person name="Ivars-Martinez E."/>
            <person name="Martin-Cuadrado A.-B."/>
            <person name="D'Auria G."/>
            <person name="Mira A."/>
            <person name="Ferriera S."/>
            <person name="Johnson J."/>
            <person name="Friedman R."/>
            <person name="Rodriguez-Valera F."/>
        </authorList>
    </citation>
    <scope>NUCLEOTIDE SEQUENCE [LARGE SCALE GENOMIC DNA]</scope>
    <source>
        <strain>DSM 17117 / CIP 110805 / LMG 28347 / Deep ecotype</strain>
    </source>
</reference>
<dbReference type="EC" id="2.3.1.117" evidence="1"/>
<dbReference type="EMBL" id="CP001103">
    <property type="protein sequence ID" value="AEA97136.1"/>
    <property type="molecule type" value="Genomic_DNA"/>
</dbReference>
<dbReference type="RefSeq" id="WP_012517490.1">
    <property type="nucleotide sequence ID" value="NC_011138.3"/>
</dbReference>
<dbReference type="SMR" id="B4RVP7"/>
<dbReference type="GeneID" id="56341456"/>
<dbReference type="KEGG" id="amc:MADE_1004950"/>
<dbReference type="HOGENOM" id="CLU_050859_0_1_6"/>
<dbReference type="UniPathway" id="UPA00034">
    <property type="reaction ID" value="UER00019"/>
</dbReference>
<dbReference type="Proteomes" id="UP000001870">
    <property type="component" value="Chromosome"/>
</dbReference>
<dbReference type="GO" id="GO:0005737">
    <property type="term" value="C:cytoplasm"/>
    <property type="evidence" value="ECO:0007669"/>
    <property type="project" value="UniProtKB-SubCell"/>
</dbReference>
<dbReference type="GO" id="GO:0008666">
    <property type="term" value="F:2,3,4,5-tetrahydropyridine-2,6-dicarboxylate N-succinyltransferase activity"/>
    <property type="evidence" value="ECO:0007669"/>
    <property type="project" value="UniProtKB-UniRule"/>
</dbReference>
<dbReference type="GO" id="GO:0016779">
    <property type="term" value="F:nucleotidyltransferase activity"/>
    <property type="evidence" value="ECO:0007669"/>
    <property type="project" value="TreeGrafter"/>
</dbReference>
<dbReference type="GO" id="GO:0019877">
    <property type="term" value="P:diaminopimelate biosynthetic process"/>
    <property type="evidence" value="ECO:0007669"/>
    <property type="project" value="UniProtKB-UniRule"/>
</dbReference>
<dbReference type="GO" id="GO:0009089">
    <property type="term" value="P:lysine biosynthetic process via diaminopimelate"/>
    <property type="evidence" value="ECO:0007669"/>
    <property type="project" value="UniProtKB-UniRule"/>
</dbReference>
<dbReference type="CDD" id="cd03350">
    <property type="entry name" value="LbH_THP_succinylT"/>
    <property type="match status" value="1"/>
</dbReference>
<dbReference type="Gene3D" id="2.160.10.10">
    <property type="entry name" value="Hexapeptide repeat proteins"/>
    <property type="match status" value="1"/>
</dbReference>
<dbReference type="Gene3D" id="1.10.166.10">
    <property type="entry name" value="Tetrahydrodipicolinate-N-succinyltransferase, N-terminal domain"/>
    <property type="match status" value="1"/>
</dbReference>
<dbReference type="HAMAP" id="MF_00811">
    <property type="entry name" value="DapD"/>
    <property type="match status" value="1"/>
</dbReference>
<dbReference type="InterPro" id="IPR005664">
    <property type="entry name" value="DapD_Trfase_Hexpep_rpt_fam"/>
</dbReference>
<dbReference type="InterPro" id="IPR001451">
    <property type="entry name" value="Hexapep"/>
</dbReference>
<dbReference type="InterPro" id="IPR018357">
    <property type="entry name" value="Hexapep_transf_CS"/>
</dbReference>
<dbReference type="InterPro" id="IPR023180">
    <property type="entry name" value="THP_succinylTrfase_dom1"/>
</dbReference>
<dbReference type="InterPro" id="IPR037133">
    <property type="entry name" value="THP_succinylTrfase_N_sf"/>
</dbReference>
<dbReference type="InterPro" id="IPR011004">
    <property type="entry name" value="Trimer_LpxA-like_sf"/>
</dbReference>
<dbReference type="NCBIfam" id="TIGR00965">
    <property type="entry name" value="dapD"/>
    <property type="match status" value="1"/>
</dbReference>
<dbReference type="NCBIfam" id="NF008808">
    <property type="entry name" value="PRK11830.1"/>
    <property type="match status" value="1"/>
</dbReference>
<dbReference type="PANTHER" id="PTHR19136:SF52">
    <property type="entry name" value="2,3,4,5-TETRAHYDROPYRIDINE-2,6-DICARBOXYLATE N-SUCCINYLTRANSFERASE"/>
    <property type="match status" value="1"/>
</dbReference>
<dbReference type="PANTHER" id="PTHR19136">
    <property type="entry name" value="MOLYBDENUM COFACTOR GUANYLYLTRANSFERASE"/>
    <property type="match status" value="1"/>
</dbReference>
<dbReference type="Pfam" id="PF14602">
    <property type="entry name" value="Hexapep_2"/>
    <property type="match status" value="1"/>
</dbReference>
<dbReference type="Pfam" id="PF14805">
    <property type="entry name" value="THDPS_N_2"/>
    <property type="match status" value="1"/>
</dbReference>
<dbReference type="SUPFAM" id="SSF51161">
    <property type="entry name" value="Trimeric LpxA-like enzymes"/>
    <property type="match status" value="1"/>
</dbReference>
<dbReference type="PROSITE" id="PS00101">
    <property type="entry name" value="HEXAPEP_TRANSFERASES"/>
    <property type="match status" value="1"/>
</dbReference>
<organism>
    <name type="scientific">Alteromonas mediterranea (strain DSM 17117 / CIP 110805 / LMG 28347 / Deep ecotype)</name>
    <dbReference type="NCBI Taxonomy" id="1774373"/>
    <lineage>
        <taxon>Bacteria</taxon>
        <taxon>Pseudomonadati</taxon>
        <taxon>Pseudomonadota</taxon>
        <taxon>Gammaproteobacteria</taxon>
        <taxon>Alteromonadales</taxon>
        <taxon>Alteromonadaceae</taxon>
        <taxon>Alteromonas/Salinimonas group</taxon>
        <taxon>Alteromonas</taxon>
    </lineage>
</organism>
<keyword id="KW-0012">Acyltransferase</keyword>
<keyword id="KW-0028">Amino-acid biosynthesis</keyword>
<keyword id="KW-0963">Cytoplasm</keyword>
<keyword id="KW-0220">Diaminopimelate biosynthesis</keyword>
<keyword id="KW-0457">Lysine biosynthesis</keyword>
<keyword id="KW-0677">Repeat</keyword>
<keyword id="KW-0808">Transferase</keyword>
<accession>B4RVP7</accession>
<accession>F2GBY5</accession>
<protein>
    <recommendedName>
        <fullName evidence="1">2,3,4,5-tetrahydropyridine-2,6-dicarboxylate N-succinyltransferase</fullName>
        <ecNumber evidence="1">2.3.1.117</ecNumber>
    </recommendedName>
    <alternativeName>
        <fullName evidence="1">Tetrahydrodipicolinate N-succinyltransferase</fullName>
        <shortName evidence="1">THP succinyltransferase</shortName>
        <shortName evidence="1">Tetrahydropicolinate succinylase</shortName>
    </alternativeName>
</protein>
<proteinExistence type="inferred from homology"/>
<evidence type="ECO:0000255" key="1">
    <source>
        <dbReference type="HAMAP-Rule" id="MF_00811"/>
    </source>
</evidence>
<gene>
    <name evidence="1" type="primary">dapD</name>
    <name type="ordered locus">MADE_1004950</name>
</gene>
<name>DAPD_ALTMD</name>
<feature type="chain" id="PRO_1000134027" description="2,3,4,5-tetrahydropyridine-2,6-dicarboxylate N-succinyltransferase">
    <location>
        <begin position="1"/>
        <end position="274"/>
    </location>
</feature>
<comment type="catalytic activity">
    <reaction evidence="1">
        <text>(S)-2,3,4,5-tetrahydrodipicolinate + succinyl-CoA + H2O = (S)-2-succinylamino-6-oxoheptanedioate + CoA</text>
        <dbReference type="Rhea" id="RHEA:17325"/>
        <dbReference type="ChEBI" id="CHEBI:15377"/>
        <dbReference type="ChEBI" id="CHEBI:15685"/>
        <dbReference type="ChEBI" id="CHEBI:16845"/>
        <dbReference type="ChEBI" id="CHEBI:57287"/>
        <dbReference type="ChEBI" id="CHEBI:57292"/>
        <dbReference type="EC" id="2.3.1.117"/>
    </reaction>
</comment>
<comment type="pathway">
    <text evidence="1">Amino-acid biosynthesis; L-lysine biosynthesis via DAP pathway; LL-2,6-diaminopimelate from (S)-tetrahydrodipicolinate (succinylase route): step 1/3.</text>
</comment>
<comment type="subcellular location">
    <subcellularLocation>
        <location evidence="1">Cytoplasm</location>
    </subcellularLocation>
</comment>
<comment type="similarity">
    <text evidence="1">Belongs to the transferase hexapeptide repeat family.</text>
</comment>
<sequence length="274" mass="29280">MNELKAIIEDAFENRDSISPSSAPDEVRDAVAQAIDLLNSGKGRVAEKIAGEWVVHQWLKKAVLLFFRLHNNDVIEGAESKFYDKVPLKYTNYTAEQFAADGARIVPPAAVRTGTFVGKNAVVMPSYVNIGAFVDEGTMVDTWATVGSCAQIGKNVHLSGGVGIGGVLEPLQANPTIIEDNCFIGARSEIVEGVIVEEGSVISMGVYIGQSTRIYDRETGEIHYGRVPAGSVVVAGNLPSADGKYSLYAAIIVKKVDAKTRAKVGINALLRGVE</sequence>